<organism>
    <name type="scientific">Acinetobacter baumannii (strain ACICU)</name>
    <dbReference type="NCBI Taxonomy" id="405416"/>
    <lineage>
        <taxon>Bacteria</taxon>
        <taxon>Pseudomonadati</taxon>
        <taxon>Pseudomonadota</taxon>
        <taxon>Gammaproteobacteria</taxon>
        <taxon>Moraxellales</taxon>
        <taxon>Moraxellaceae</taxon>
        <taxon>Acinetobacter</taxon>
        <taxon>Acinetobacter calcoaceticus/baumannii complex</taxon>
    </lineage>
</organism>
<feature type="chain" id="PRO_1000131720" description="Co-chaperone protein HscB homolog">
    <location>
        <begin position="1"/>
        <end position="172"/>
    </location>
</feature>
<feature type="domain" description="J" evidence="1">
    <location>
        <begin position="2"/>
        <end position="69"/>
    </location>
</feature>
<comment type="function">
    <text evidence="1">Co-chaperone involved in the maturation of iron-sulfur cluster-containing proteins. Seems to help targeting proteins to be folded toward HscA.</text>
</comment>
<comment type="subunit">
    <text evidence="1">Interacts with HscA and stimulates its ATPase activity.</text>
</comment>
<comment type="similarity">
    <text evidence="1">Belongs to the HscB family.</text>
</comment>
<dbReference type="EMBL" id="CP000863">
    <property type="protein sequence ID" value="ACC56968.1"/>
    <property type="molecule type" value="Genomic_DNA"/>
</dbReference>
<dbReference type="RefSeq" id="WP_001015254.1">
    <property type="nucleotide sequence ID" value="NZ_CP031380.1"/>
</dbReference>
<dbReference type="SMR" id="B2HZI2"/>
<dbReference type="GeneID" id="92893838"/>
<dbReference type="KEGG" id="abc:ACICU_01656"/>
<dbReference type="HOGENOM" id="CLU_068529_2_0_6"/>
<dbReference type="Proteomes" id="UP000008839">
    <property type="component" value="Chromosome"/>
</dbReference>
<dbReference type="GO" id="GO:0001671">
    <property type="term" value="F:ATPase activator activity"/>
    <property type="evidence" value="ECO:0007669"/>
    <property type="project" value="InterPro"/>
</dbReference>
<dbReference type="GO" id="GO:0051087">
    <property type="term" value="F:protein-folding chaperone binding"/>
    <property type="evidence" value="ECO:0007669"/>
    <property type="project" value="InterPro"/>
</dbReference>
<dbReference type="GO" id="GO:0044571">
    <property type="term" value="P:[2Fe-2S] cluster assembly"/>
    <property type="evidence" value="ECO:0007669"/>
    <property type="project" value="InterPro"/>
</dbReference>
<dbReference type="GO" id="GO:0051259">
    <property type="term" value="P:protein complex oligomerization"/>
    <property type="evidence" value="ECO:0007669"/>
    <property type="project" value="InterPro"/>
</dbReference>
<dbReference type="GO" id="GO:0006457">
    <property type="term" value="P:protein folding"/>
    <property type="evidence" value="ECO:0007669"/>
    <property type="project" value="UniProtKB-UniRule"/>
</dbReference>
<dbReference type="CDD" id="cd06257">
    <property type="entry name" value="DnaJ"/>
    <property type="match status" value="1"/>
</dbReference>
<dbReference type="Gene3D" id="1.10.287.110">
    <property type="entry name" value="DnaJ domain"/>
    <property type="match status" value="1"/>
</dbReference>
<dbReference type="Gene3D" id="1.20.1280.20">
    <property type="entry name" value="HscB, C-terminal domain"/>
    <property type="match status" value="1"/>
</dbReference>
<dbReference type="HAMAP" id="MF_00682">
    <property type="entry name" value="HscB"/>
    <property type="match status" value="1"/>
</dbReference>
<dbReference type="InterPro" id="IPR001623">
    <property type="entry name" value="DnaJ_domain"/>
</dbReference>
<dbReference type="InterPro" id="IPR004640">
    <property type="entry name" value="HscB"/>
</dbReference>
<dbReference type="InterPro" id="IPR036386">
    <property type="entry name" value="HscB_C_sf"/>
</dbReference>
<dbReference type="InterPro" id="IPR009073">
    <property type="entry name" value="HscB_oligo_C"/>
</dbReference>
<dbReference type="InterPro" id="IPR036869">
    <property type="entry name" value="J_dom_sf"/>
</dbReference>
<dbReference type="NCBIfam" id="TIGR00714">
    <property type="entry name" value="hscB"/>
    <property type="match status" value="1"/>
</dbReference>
<dbReference type="PANTHER" id="PTHR14021">
    <property type="entry name" value="IRON-SULFUR CLUSTER CO-CHAPERONE PROTEIN HSCB"/>
    <property type="match status" value="1"/>
</dbReference>
<dbReference type="PANTHER" id="PTHR14021:SF15">
    <property type="entry name" value="IRON-SULFUR CLUSTER CO-CHAPERONE PROTEIN HSCB"/>
    <property type="match status" value="1"/>
</dbReference>
<dbReference type="Pfam" id="PF00226">
    <property type="entry name" value="DnaJ"/>
    <property type="match status" value="1"/>
</dbReference>
<dbReference type="Pfam" id="PF07743">
    <property type="entry name" value="HSCB_C"/>
    <property type="match status" value="1"/>
</dbReference>
<dbReference type="SMART" id="SM00271">
    <property type="entry name" value="DnaJ"/>
    <property type="match status" value="1"/>
</dbReference>
<dbReference type="SUPFAM" id="SSF46565">
    <property type="entry name" value="Chaperone J-domain"/>
    <property type="match status" value="1"/>
</dbReference>
<dbReference type="SUPFAM" id="SSF47144">
    <property type="entry name" value="HSC20 (HSCB), C-terminal oligomerisation domain"/>
    <property type="match status" value="1"/>
</dbReference>
<dbReference type="PROSITE" id="PS50076">
    <property type="entry name" value="DNAJ_2"/>
    <property type="match status" value="1"/>
</dbReference>
<reference key="1">
    <citation type="journal article" date="2008" name="Antimicrob. Agents Chemother.">
        <title>Whole-genome pyrosequencing of an epidemic multidrug-resistant Acinetobacter baumannii strain belonging to the European clone II group.</title>
        <authorList>
            <person name="Iacono M."/>
            <person name="Villa L."/>
            <person name="Fortini D."/>
            <person name="Bordoni R."/>
            <person name="Imperi F."/>
            <person name="Bonnal R.J."/>
            <person name="Sicheritz-Ponten T."/>
            <person name="De Bellis G."/>
            <person name="Visca P."/>
            <person name="Cassone A."/>
            <person name="Carattoli A."/>
        </authorList>
    </citation>
    <scope>NUCLEOTIDE SEQUENCE [LARGE SCALE GENOMIC DNA]</scope>
    <source>
        <strain>ACICU</strain>
    </source>
</reference>
<keyword id="KW-0143">Chaperone</keyword>
<proteinExistence type="inferred from homology"/>
<protein>
    <recommendedName>
        <fullName evidence="1">Co-chaperone protein HscB homolog</fullName>
    </recommendedName>
</protein>
<gene>
    <name evidence="1" type="primary">hscB</name>
    <name type="ordered locus">ACICU_01656</name>
</gene>
<accession>B2HZI2</accession>
<name>HSCB_ACIBC</name>
<evidence type="ECO:0000255" key="1">
    <source>
        <dbReference type="HAMAP-Rule" id="MF_00682"/>
    </source>
</evidence>
<sequence>MNHFELFNLPVALDIDLASLKSNFLSLQQQYHPDKAADKDQALIKSSEINQAFKTLSQVDSRAAYLLALKKQDHHLDQSISDFEFLQSALELREQLDEATSSEHLRTLRLEVQQWIDGLVREFKIDYSEEDWAEARDTVRKLRFFQRVLNDIDKAEDQLLDDEDSFDLDDDF</sequence>